<name>NADA_BACCZ</name>
<protein>
    <recommendedName>
        <fullName evidence="1">Quinolinate synthase</fullName>
        <ecNumber evidence="1">2.5.1.72</ecNumber>
    </recommendedName>
</protein>
<accession>Q634B5</accession>
<feature type="chain" id="PRO_1000024987" description="Quinolinate synthase">
    <location>
        <begin position="1"/>
        <end position="368"/>
    </location>
</feature>
<feature type="binding site" evidence="1">
    <location>
        <position position="46"/>
    </location>
    <ligand>
        <name>iminosuccinate</name>
        <dbReference type="ChEBI" id="CHEBI:77875"/>
    </ligand>
</feature>
<feature type="binding site" evidence="1">
    <location>
        <position position="63"/>
    </location>
    <ligand>
        <name>iminosuccinate</name>
        <dbReference type="ChEBI" id="CHEBI:77875"/>
    </ligand>
</feature>
<feature type="binding site" evidence="1">
    <location>
        <position position="110"/>
    </location>
    <ligand>
        <name>[4Fe-4S] cluster</name>
        <dbReference type="ChEBI" id="CHEBI:49883"/>
    </ligand>
</feature>
<feature type="binding site" evidence="1">
    <location>
        <begin position="141"/>
        <end position="143"/>
    </location>
    <ligand>
        <name>iminosuccinate</name>
        <dbReference type="ChEBI" id="CHEBI:77875"/>
    </ligand>
</feature>
<feature type="binding site" evidence="1">
    <location>
        <position position="162"/>
    </location>
    <ligand>
        <name>iminosuccinate</name>
        <dbReference type="ChEBI" id="CHEBI:77875"/>
    </ligand>
</feature>
<feature type="binding site" evidence="1">
    <location>
        <position position="230"/>
    </location>
    <ligand>
        <name>[4Fe-4S] cluster</name>
        <dbReference type="ChEBI" id="CHEBI:49883"/>
    </ligand>
</feature>
<feature type="binding site" evidence="1">
    <location>
        <begin position="256"/>
        <end position="258"/>
    </location>
    <ligand>
        <name>iminosuccinate</name>
        <dbReference type="ChEBI" id="CHEBI:77875"/>
    </ligand>
</feature>
<feature type="binding site" evidence="1">
    <location>
        <position position="273"/>
    </location>
    <ligand>
        <name>iminosuccinate</name>
        <dbReference type="ChEBI" id="CHEBI:77875"/>
    </ligand>
</feature>
<feature type="binding site" evidence="1">
    <location>
        <position position="320"/>
    </location>
    <ligand>
        <name>[4Fe-4S] cluster</name>
        <dbReference type="ChEBI" id="CHEBI:49883"/>
    </ligand>
</feature>
<reference key="1">
    <citation type="journal article" date="2006" name="J. Bacteriol.">
        <title>Pathogenomic sequence analysis of Bacillus cereus and Bacillus thuringiensis isolates closely related to Bacillus anthracis.</title>
        <authorList>
            <person name="Han C.S."/>
            <person name="Xie G."/>
            <person name="Challacombe J.F."/>
            <person name="Altherr M.R."/>
            <person name="Bhotika S.S."/>
            <person name="Bruce D."/>
            <person name="Campbell C.S."/>
            <person name="Campbell M.L."/>
            <person name="Chen J."/>
            <person name="Chertkov O."/>
            <person name="Cleland C."/>
            <person name="Dimitrijevic M."/>
            <person name="Doggett N.A."/>
            <person name="Fawcett J.J."/>
            <person name="Glavina T."/>
            <person name="Goodwin L.A."/>
            <person name="Hill K.K."/>
            <person name="Hitchcock P."/>
            <person name="Jackson P.J."/>
            <person name="Keim P."/>
            <person name="Kewalramani A.R."/>
            <person name="Longmire J."/>
            <person name="Lucas S."/>
            <person name="Malfatti S."/>
            <person name="McMurry K."/>
            <person name="Meincke L.J."/>
            <person name="Misra M."/>
            <person name="Moseman B.L."/>
            <person name="Mundt M."/>
            <person name="Munk A.C."/>
            <person name="Okinaka R.T."/>
            <person name="Parson-Quintana B."/>
            <person name="Reilly L.P."/>
            <person name="Richardson P."/>
            <person name="Robinson D.L."/>
            <person name="Rubin E."/>
            <person name="Saunders E."/>
            <person name="Tapia R."/>
            <person name="Tesmer J.G."/>
            <person name="Thayer N."/>
            <person name="Thompson L.S."/>
            <person name="Tice H."/>
            <person name="Ticknor L.O."/>
            <person name="Wills P.L."/>
            <person name="Brettin T.S."/>
            <person name="Gilna P."/>
        </authorList>
    </citation>
    <scope>NUCLEOTIDE SEQUENCE [LARGE SCALE GENOMIC DNA]</scope>
    <source>
        <strain>ZK / E33L</strain>
    </source>
</reference>
<evidence type="ECO:0000255" key="1">
    <source>
        <dbReference type="HAMAP-Rule" id="MF_00569"/>
    </source>
</evidence>
<dbReference type="EC" id="2.5.1.72" evidence="1"/>
<dbReference type="EMBL" id="CP000001">
    <property type="protein sequence ID" value="AAU16096.1"/>
    <property type="molecule type" value="Genomic_DNA"/>
</dbReference>
<dbReference type="RefSeq" id="WP_000025289.1">
    <property type="nucleotide sequence ID" value="NC_006274.1"/>
</dbReference>
<dbReference type="SMR" id="Q634B5"/>
<dbReference type="KEGG" id="bcz:BCE33L4173"/>
<dbReference type="PATRIC" id="fig|288681.22.peg.1210"/>
<dbReference type="UniPathway" id="UPA00253">
    <property type="reaction ID" value="UER00327"/>
</dbReference>
<dbReference type="Proteomes" id="UP000002612">
    <property type="component" value="Chromosome"/>
</dbReference>
<dbReference type="GO" id="GO:0005829">
    <property type="term" value="C:cytosol"/>
    <property type="evidence" value="ECO:0007669"/>
    <property type="project" value="TreeGrafter"/>
</dbReference>
<dbReference type="GO" id="GO:0051539">
    <property type="term" value="F:4 iron, 4 sulfur cluster binding"/>
    <property type="evidence" value="ECO:0007669"/>
    <property type="project" value="UniProtKB-KW"/>
</dbReference>
<dbReference type="GO" id="GO:0046872">
    <property type="term" value="F:metal ion binding"/>
    <property type="evidence" value="ECO:0007669"/>
    <property type="project" value="UniProtKB-KW"/>
</dbReference>
<dbReference type="GO" id="GO:0008987">
    <property type="term" value="F:quinolinate synthetase A activity"/>
    <property type="evidence" value="ECO:0007669"/>
    <property type="project" value="UniProtKB-UniRule"/>
</dbReference>
<dbReference type="GO" id="GO:0034628">
    <property type="term" value="P:'de novo' NAD biosynthetic process from L-aspartate"/>
    <property type="evidence" value="ECO:0007669"/>
    <property type="project" value="TreeGrafter"/>
</dbReference>
<dbReference type="FunFam" id="3.40.50.10800:FF:000001">
    <property type="entry name" value="Quinolinate synthase A"/>
    <property type="match status" value="1"/>
</dbReference>
<dbReference type="Gene3D" id="3.40.50.10800">
    <property type="entry name" value="NadA-like"/>
    <property type="match status" value="3"/>
</dbReference>
<dbReference type="HAMAP" id="MF_00569">
    <property type="entry name" value="NadA_type3"/>
    <property type="match status" value="1"/>
</dbReference>
<dbReference type="InterPro" id="IPR003473">
    <property type="entry name" value="NadA"/>
</dbReference>
<dbReference type="InterPro" id="IPR036094">
    <property type="entry name" value="NadA_sf"/>
</dbReference>
<dbReference type="InterPro" id="IPR023515">
    <property type="entry name" value="Quinolinate_synth_A_type3"/>
</dbReference>
<dbReference type="NCBIfam" id="TIGR00550">
    <property type="entry name" value="nadA"/>
    <property type="match status" value="1"/>
</dbReference>
<dbReference type="NCBIfam" id="NF006880">
    <property type="entry name" value="PRK09375.2-1"/>
    <property type="match status" value="1"/>
</dbReference>
<dbReference type="NCBIfam" id="NF006883">
    <property type="entry name" value="PRK09375.2-4"/>
    <property type="match status" value="1"/>
</dbReference>
<dbReference type="PANTHER" id="PTHR30573:SF0">
    <property type="entry name" value="QUINOLINATE SYNTHASE, CHLOROPLASTIC"/>
    <property type="match status" value="1"/>
</dbReference>
<dbReference type="PANTHER" id="PTHR30573">
    <property type="entry name" value="QUINOLINATE SYNTHETASE A"/>
    <property type="match status" value="1"/>
</dbReference>
<dbReference type="Pfam" id="PF02445">
    <property type="entry name" value="NadA"/>
    <property type="match status" value="1"/>
</dbReference>
<dbReference type="SUPFAM" id="SSF142754">
    <property type="entry name" value="NadA-like"/>
    <property type="match status" value="1"/>
</dbReference>
<sequence>MSILEKVQPIETMLPERYYTMSTEDMEKRVREIKEKMGETLFIPGHHYQKDEVVQFSDAAGDSLQLAQVAASNKDAKYIVFCGVHFMAETADMLTTDDQIVILPDMRAGCSMADMADIEQTERAWKELTKLFGDTMIPLTYVNSTAAIKAFCGRNGGATVTSSNAKQMVSWAFTQKERLVFLPDQHLGRNTAYDLGIPLDKMAVWDPHTDSLEYDGDIEEIQVILWKGHCSVHQNFTVKNIENVRKNHPDMNIIVHPECCYEVVAASDYAGSTKYIIDMIESAPSGSKWAIGTEMNLVNRIIQQHPDKEIVSLNPFMCPCLTMNRIDLPHLLWALETIERGEEINVISVDKQVTEEAVLALNRMLERV</sequence>
<proteinExistence type="inferred from homology"/>
<keyword id="KW-0004">4Fe-4S</keyword>
<keyword id="KW-0963">Cytoplasm</keyword>
<keyword id="KW-0408">Iron</keyword>
<keyword id="KW-0411">Iron-sulfur</keyword>
<keyword id="KW-0479">Metal-binding</keyword>
<keyword id="KW-0662">Pyridine nucleotide biosynthesis</keyword>
<keyword id="KW-0808">Transferase</keyword>
<comment type="function">
    <text evidence="1">Catalyzes the condensation of iminoaspartate with dihydroxyacetone phosphate to form quinolinate.</text>
</comment>
<comment type="catalytic activity">
    <reaction evidence="1">
        <text>iminosuccinate + dihydroxyacetone phosphate = quinolinate + phosphate + 2 H2O + H(+)</text>
        <dbReference type="Rhea" id="RHEA:25888"/>
        <dbReference type="ChEBI" id="CHEBI:15377"/>
        <dbReference type="ChEBI" id="CHEBI:15378"/>
        <dbReference type="ChEBI" id="CHEBI:29959"/>
        <dbReference type="ChEBI" id="CHEBI:43474"/>
        <dbReference type="ChEBI" id="CHEBI:57642"/>
        <dbReference type="ChEBI" id="CHEBI:77875"/>
        <dbReference type="EC" id="2.5.1.72"/>
    </reaction>
    <physiologicalReaction direction="left-to-right" evidence="1">
        <dbReference type="Rhea" id="RHEA:25889"/>
    </physiologicalReaction>
</comment>
<comment type="cofactor">
    <cofactor evidence="1">
        <name>[4Fe-4S] cluster</name>
        <dbReference type="ChEBI" id="CHEBI:49883"/>
    </cofactor>
    <text evidence="1">Binds 1 [4Fe-4S] cluster per subunit.</text>
</comment>
<comment type="pathway">
    <text evidence="1">Cofactor biosynthesis; NAD(+) biosynthesis; quinolinate from iminoaspartate: step 1/1.</text>
</comment>
<comment type="subcellular location">
    <subcellularLocation>
        <location evidence="1">Cytoplasm</location>
    </subcellularLocation>
</comment>
<comment type="similarity">
    <text evidence="1">Belongs to the quinolinate synthase family. Type 3 subfamily.</text>
</comment>
<organism>
    <name type="scientific">Bacillus cereus (strain ZK / E33L)</name>
    <dbReference type="NCBI Taxonomy" id="288681"/>
    <lineage>
        <taxon>Bacteria</taxon>
        <taxon>Bacillati</taxon>
        <taxon>Bacillota</taxon>
        <taxon>Bacilli</taxon>
        <taxon>Bacillales</taxon>
        <taxon>Bacillaceae</taxon>
        <taxon>Bacillus</taxon>
        <taxon>Bacillus cereus group</taxon>
    </lineage>
</organism>
<gene>
    <name evidence="1" type="primary">nadA</name>
    <name type="ordered locus">BCE33L4173</name>
</gene>